<protein>
    <recommendedName>
        <fullName>U1-lycotoxin-Ls1b</fullName>
    </recommendedName>
    <alternativeName>
        <fullName>Toxin-like structure LSTX-A14</fullName>
    </alternativeName>
</protein>
<reference key="1">
    <citation type="journal article" date="2010" name="Zoology">
        <title>Transcriptome analysis of the venom glands of the Chinese wolf spider Lycosa singoriensis.</title>
        <authorList>
            <person name="Zhang Y."/>
            <person name="Chen J."/>
            <person name="Tang X."/>
            <person name="Wang F."/>
            <person name="Jiang L."/>
            <person name="Xiong X."/>
            <person name="Wang M."/>
            <person name="Rong M."/>
            <person name="Liu Z."/>
            <person name="Liang S."/>
        </authorList>
    </citation>
    <scope>NUCLEOTIDE SEQUENCE [LARGE SCALE MRNA]</scope>
    <source>
        <tissue>Venom gland</tissue>
    </source>
</reference>
<evidence type="ECO:0000250" key="1"/>
<evidence type="ECO:0000255" key="2"/>
<evidence type="ECO:0000305" key="3"/>
<sequence>MMKALVVVALLVTLISYSSSEGIDDLEADELLSLMANEQTRKECIPKHHECTSNKHGCCRGNFFKYKCQCTTVVTQDGEQTERCFCGTPPHHKAAELVVGFGKKIFG</sequence>
<feature type="signal peptide" evidence="2">
    <location>
        <begin position="1"/>
        <end position="20"/>
    </location>
</feature>
<feature type="propeptide" id="PRO_0000401525" evidence="1">
    <location>
        <begin position="21"/>
        <end position="41"/>
    </location>
</feature>
<feature type="chain" id="PRO_0000401526" description="U1-lycotoxin-Ls1b">
    <location>
        <begin position="42"/>
        <end position="107"/>
    </location>
</feature>
<feature type="disulfide bond" evidence="1">
    <location>
        <begin position="44"/>
        <end position="59"/>
    </location>
</feature>
<feature type="disulfide bond" evidence="1">
    <location>
        <begin position="51"/>
        <end position="68"/>
    </location>
</feature>
<feature type="disulfide bond" evidence="1">
    <location>
        <begin position="58"/>
        <end position="86"/>
    </location>
</feature>
<feature type="disulfide bond" evidence="1">
    <location>
        <begin position="70"/>
        <end position="84"/>
    </location>
</feature>
<dbReference type="EMBL" id="EU925937">
    <property type="protein sequence ID" value="ACI41269.1"/>
    <property type="molecule type" value="mRNA"/>
</dbReference>
<dbReference type="EMBL" id="FM863941">
    <property type="protein sequence ID" value="CAS03539.1"/>
    <property type="molecule type" value="mRNA"/>
</dbReference>
<dbReference type="SMR" id="B6DCK3"/>
<dbReference type="ArachnoServer" id="AS000884">
    <property type="toxin name" value="U1-lycotoxin-Ls1b"/>
</dbReference>
<dbReference type="GO" id="GO:0005576">
    <property type="term" value="C:extracellular region"/>
    <property type="evidence" value="ECO:0007669"/>
    <property type="project" value="UniProtKB-SubCell"/>
</dbReference>
<dbReference type="GO" id="GO:0090729">
    <property type="term" value="F:toxin activity"/>
    <property type="evidence" value="ECO:0007669"/>
    <property type="project" value="UniProtKB-KW"/>
</dbReference>
<dbReference type="InterPro" id="IPR019553">
    <property type="entry name" value="Spider_toxin_CSTX_knottin"/>
</dbReference>
<dbReference type="InterPro" id="IPR011142">
    <property type="entry name" value="Spider_toxin_CSTX_Knottin_CS"/>
</dbReference>
<dbReference type="Pfam" id="PF10530">
    <property type="entry name" value="Toxin_35"/>
    <property type="match status" value="1"/>
</dbReference>
<dbReference type="PROSITE" id="PS60029">
    <property type="entry name" value="SPIDER_CSTX"/>
    <property type="match status" value="1"/>
</dbReference>
<proteinExistence type="evidence at transcript level"/>
<name>TX114_LYCSI</name>
<accession>B6DCK3</accession>
<comment type="subcellular location">
    <subcellularLocation>
        <location evidence="1">Secreted</location>
    </subcellularLocation>
</comment>
<comment type="tissue specificity">
    <text>Expressed by the venom gland.</text>
</comment>
<comment type="domain">
    <text evidence="1">The presence of a 'disulfide through disulfide knot' structurally defines this protein as a knottin.</text>
</comment>
<comment type="similarity">
    <text evidence="3">Belongs to the neurotoxin 19 (CSTX) family. 04 (U1-Lctx) subfamily.</text>
</comment>
<organism>
    <name type="scientific">Lycosa singoriensis</name>
    <name type="common">Wolf spider</name>
    <name type="synonym">Aranea singoriensis</name>
    <dbReference type="NCBI Taxonomy" id="434756"/>
    <lineage>
        <taxon>Eukaryota</taxon>
        <taxon>Metazoa</taxon>
        <taxon>Ecdysozoa</taxon>
        <taxon>Arthropoda</taxon>
        <taxon>Chelicerata</taxon>
        <taxon>Arachnida</taxon>
        <taxon>Araneae</taxon>
        <taxon>Araneomorphae</taxon>
        <taxon>Entelegynae</taxon>
        <taxon>Lycosoidea</taxon>
        <taxon>Lycosidae</taxon>
        <taxon>Lycosa</taxon>
    </lineage>
</organism>
<keyword id="KW-1015">Disulfide bond</keyword>
<keyword id="KW-0960">Knottin</keyword>
<keyword id="KW-0964">Secreted</keyword>
<keyword id="KW-0732">Signal</keyword>
<keyword id="KW-0800">Toxin</keyword>